<name>Y3458_SHEB9</name>
<proteinExistence type="inferred from homology"/>
<reference key="1">
    <citation type="submission" date="2007-11" db="EMBL/GenBank/DDBJ databases">
        <title>Complete sequence of chromosome of Shewanella baltica OS195.</title>
        <authorList>
            <consortium name="US DOE Joint Genome Institute"/>
            <person name="Copeland A."/>
            <person name="Lucas S."/>
            <person name="Lapidus A."/>
            <person name="Barry K."/>
            <person name="Glavina del Rio T."/>
            <person name="Dalin E."/>
            <person name="Tice H."/>
            <person name="Pitluck S."/>
            <person name="Chain P."/>
            <person name="Malfatti S."/>
            <person name="Shin M."/>
            <person name="Vergez L."/>
            <person name="Schmutz J."/>
            <person name="Larimer F."/>
            <person name="Land M."/>
            <person name="Hauser L."/>
            <person name="Kyrpides N."/>
            <person name="Kim E."/>
            <person name="Brettar I."/>
            <person name="Rodrigues J."/>
            <person name="Konstantinidis K."/>
            <person name="Klappenbach J."/>
            <person name="Hofle M."/>
            <person name="Tiedje J."/>
            <person name="Richardson P."/>
        </authorList>
    </citation>
    <scope>NUCLEOTIDE SEQUENCE [LARGE SCALE GENOMIC DNA]</scope>
    <source>
        <strain>OS195</strain>
    </source>
</reference>
<feature type="chain" id="PRO_1000082828" description="UPF0250 protein Sbal195_3458">
    <location>
        <begin position="1"/>
        <end position="88"/>
    </location>
</feature>
<organism>
    <name type="scientific">Shewanella baltica (strain OS195)</name>
    <dbReference type="NCBI Taxonomy" id="399599"/>
    <lineage>
        <taxon>Bacteria</taxon>
        <taxon>Pseudomonadati</taxon>
        <taxon>Pseudomonadota</taxon>
        <taxon>Gammaproteobacteria</taxon>
        <taxon>Alteromonadales</taxon>
        <taxon>Shewanellaceae</taxon>
        <taxon>Shewanella</taxon>
    </lineage>
</organism>
<evidence type="ECO:0000255" key="1">
    <source>
        <dbReference type="HAMAP-Rule" id="MF_00659"/>
    </source>
</evidence>
<protein>
    <recommendedName>
        <fullName evidence="1">UPF0250 protein Sbal195_3458</fullName>
    </recommendedName>
</protein>
<dbReference type="EMBL" id="CP000891">
    <property type="protein sequence ID" value="ABX50620.1"/>
    <property type="molecule type" value="Genomic_DNA"/>
</dbReference>
<dbReference type="SMR" id="A9L012"/>
<dbReference type="KEGG" id="sbn:Sbal195_3458"/>
<dbReference type="HOGENOM" id="CLU_161438_2_1_6"/>
<dbReference type="Proteomes" id="UP000000770">
    <property type="component" value="Chromosome"/>
</dbReference>
<dbReference type="GO" id="GO:0005829">
    <property type="term" value="C:cytosol"/>
    <property type="evidence" value="ECO:0007669"/>
    <property type="project" value="TreeGrafter"/>
</dbReference>
<dbReference type="Gene3D" id="3.30.70.260">
    <property type="match status" value="1"/>
</dbReference>
<dbReference type="HAMAP" id="MF_00659">
    <property type="entry name" value="UPF0250"/>
    <property type="match status" value="1"/>
</dbReference>
<dbReference type="InterPro" id="IPR007454">
    <property type="entry name" value="UPF0250_YbeD-like"/>
</dbReference>
<dbReference type="InterPro" id="IPR027471">
    <property type="entry name" value="YbeD-like_sf"/>
</dbReference>
<dbReference type="NCBIfam" id="NF003447">
    <property type="entry name" value="PRK04998.1"/>
    <property type="match status" value="1"/>
</dbReference>
<dbReference type="PANTHER" id="PTHR38036">
    <property type="entry name" value="UPF0250 PROTEIN YBED"/>
    <property type="match status" value="1"/>
</dbReference>
<dbReference type="PANTHER" id="PTHR38036:SF1">
    <property type="entry name" value="UPF0250 PROTEIN YBED"/>
    <property type="match status" value="1"/>
</dbReference>
<dbReference type="Pfam" id="PF04359">
    <property type="entry name" value="DUF493"/>
    <property type="match status" value="1"/>
</dbReference>
<dbReference type="SUPFAM" id="SSF117991">
    <property type="entry name" value="YbeD/HP0495-like"/>
    <property type="match status" value="1"/>
</dbReference>
<accession>A9L012</accession>
<gene>
    <name type="ordered locus">Sbal195_3458</name>
</gene>
<comment type="similarity">
    <text evidence="1">Belongs to the UPF0250 family.</text>
</comment>
<sequence>MLDTKFDELMDFPCAFPFKVVGEAHETLTDKVVAVVQKHAPGDYSPSTKTSSKGSYHSITIRVTVTSKDHIEILYTELAAIEGVRRVL</sequence>